<keyword id="KW-0002">3D-structure</keyword>
<keyword id="KW-0067">ATP-binding</keyword>
<keyword id="KW-0436">Ligase</keyword>
<keyword id="KW-0547">Nucleotide-binding</keyword>
<keyword id="KW-0648">Protein biosynthesis</keyword>
<keyword id="KW-1185">Reference proteome</keyword>
<feature type="chain" id="PRO_0000148757" description="Aspartyl/glutamyl-tRNA(Asn/Gln) amidotransferase subunit B">
    <location>
        <begin position="1"/>
        <end position="478"/>
    </location>
</feature>
<feature type="strand" evidence="3">
    <location>
        <begin position="5"/>
        <end position="16"/>
    </location>
</feature>
<feature type="strand" evidence="3">
    <location>
        <begin position="23"/>
        <end position="26"/>
    </location>
</feature>
<feature type="turn" evidence="3">
    <location>
        <begin position="41"/>
        <end position="45"/>
    </location>
</feature>
<feature type="helix" evidence="3">
    <location>
        <begin position="55"/>
        <end position="67"/>
    </location>
</feature>
<feature type="strand" evidence="3">
    <location>
        <begin position="74"/>
        <end position="76"/>
    </location>
</feature>
<feature type="strand" evidence="3">
    <location>
        <begin position="78"/>
        <end position="82"/>
    </location>
</feature>
<feature type="strand" evidence="3">
    <location>
        <begin position="91"/>
        <end position="99"/>
    </location>
</feature>
<feature type="strand" evidence="3">
    <location>
        <begin position="101"/>
        <end position="110"/>
    </location>
</feature>
<feature type="strand" evidence="4">
    <location>
        <begin position="112"/>
        <end position="114"/>
    </location>
</feature>
<feature type="strand" evidence="3">
    <location>
        <begin position="116"/>
        <end position="128"/>
    </location>
</feature>
<feature type="strand" evidence="3">
    <location>
        <begin position="132"/>
        <end position="136"/>
    </location>
</feature>
<feature type="strand" evidence="3">
    <location>
        <begin position="139"/>
        <end position="143"/>
    </location>
</feature>
<feature type="strand" evidence="3">
    <location>
        <begin position="150"/>
        <end position="156"/>
    </location>
</feature>
<feature type="helix" evidence="3">
    <location>
        <begin position="163"/>
        <end position="180"/>
    </location>
</feature>
<feature type="helix" evidence="3">
    <location>
        <begin position="187"/>
        <end position="189"/>
    </location>
</feature>
<feature type="strand" evidence="3">
    <location>
        <begin position="191"/>
        <end position="202"/>
    </location>
</feature>
<feature type="strand" evidence="3">
    <location>
        <begin position="212"/>
        <end position="215"/>
    </location>
</feature>
<feature type="helix" evidence="3">
    <location>
        <begin position="220"/>
        <end position="239"/>
    </location>
</feature>
<feature type="strand" evidence="3">
    <location>
        <begin position="248"/>
        <end position="252"/>
    </location>
</feature>
<feature type="turn" evidence="3">
    <location>
        <begin position="253"/>
        <end position="256"/>
    </location>
</feature>
<feature type="strand" evidence="3">
    <location>
        <begin position="257"/>
        <end position="259"/>
    </location>
</feature>
<feature type="helix" evidence="3">
    <location>
        <begin position="285"/>
        <end position="293"/>
    </location>
</feature>
<feature type="helix" evidence="3">
    <location>
        <begin position="299"/>
        <end position="309"/>
    </location>
</feature>
<feature type="helix" evidence="3">
    <location>
        <begin position="314"/>
        <end position="322"/>
    </location>
</feature>
<feature type="helix" evidence="3">
    <location>
        <begin position="324"/>
        <end position="336"/>
    </location>
</feature>
<feature type="helix" evidence="3">
    <location>
        <begin position="340"/>
        <end position="349"/>
    </location>
</feature>
<feature type="helix" evidence="3">
    <location>
        <begin position="351"/>
        <end position="358"/>
    </location>
</feature>
<feature type="helix" evidence="3">
    <location>
        <begin position="362"/>
        <end position="364"/>
    </location>
</feature>
<feature type="helix" evidence="3">
    <location>
        <begin position="369"/>
        <end position="380"/>
    </location>
</feature>
<feature type="helix" evidence="3">
    <location>
        <begin position="386"/>
        <end position="399"/>
    </location>
</feature>
<feature type="helix" evidence="3">
    <location>
        <begin position="403"/>
        <end position="410"/>
    </location>
</feature>
<sequence length="478" mass="55041">MNEKYEAVIGLEIHVQMDTKTKMFCGCKVEFGAEPNTNVCPVCLGMPGALPIVNKRAVEYAIRASLALNCEVHEESVFARKHYFYPDLPKGYQISQYEKPLATNGWVELNLPNGEKKKVRIRRLHIEEDAGKNIHEGDKTLVDLNRAGTPLMEIVTEPDIRTPEEARLFLEKLRNIMRYAGVSKADMEKGQLRCDINVSIRPKGSKEFGTRVEIKNVNSFRFVQKALEYEIERQINVVEEGGEVVQETRTFDPQTGKTYPMRTKEEAEDYRYFPDPDLVPLKVKKEWIEEIKKNMPELPDQRFERLIKEYGLSEYEAGILVNHKEVGDFFEEAVRHFKEPKGIVNWLINDLLGLLRDKGISIEESPVKPEHLAELVKLIKEKVISTKIGKEVIKEMVETGKTPSQIVEEKGLKQITDENQIKELVKKIFEKHPKEVERLKQGEEKLIGFFVGQVMRETRGKANPQVVNKVIRELVKEV</sequence>
<gene>
    <name type="primary">gatB</name>
    <name type="ordered locus">aq_461</name>
</gene>
<organism>
    <name type="scientific">Aquifex aeolicus (strain VF5)</name>
    <dbReference type="NCBI Taxonomy" id="224324"/>
    <lineage>
        <taxon>Bacteria</taxon>
        <taxon>Pseudomonadati</taxon>
        <taxon>Aquificota</taxon>
        <taxon>Aquificia</taxon>
        <taxon>Aquificales</taxon>
        <taxon>Aquificaceae</taxon>
        <taxon>Aquifex</taxon>
    </lineage>
</organism>
<protein>
    <recommendedName>
        <fullName>Aspartyl/glutamyl-tRNA(Asn/Gln) amidotransferase subunit B</fullName>
        <shortName>Asp/Glu-ADT subunit B</shortName>
        <ecNumber>6.3.5.-</ecNumber>
    </recommendedName>
</protein>
<proteinExistence type="evidence at protein level"/>
<evidence type="ECO:0000250" key="1"/>
<evidence type="ECO:0000305" key="2"/>
<evidence type="ECO:0007829" key="3">
    <source>
        <dbReference type="PDB" id="3H0L"/>
    </source>
</evidence>
<evidence type="ECO:0007829" key="4">
    <source>
        <dbReference type="PDB" id="3H0R"/>
    </source>
</evidence>
<accession>O66766</accession>
<dbReference type="EC" id="6.3.5.-"/>
<dbReference type="EMBL" id="AE000657">
    <property type="protein sequence ID" value="AAC06727.1"/>
    <property type="molecule type" value="Genomic_DNA"/>
</dbReference>
<dbReference type="PIR" id="B70342">
    <property type="entry name" value="B70342"/>
</dbReference>
<dbReference type="RefSeq" id="NP_213326.1">
    <property type="nucleotide sequence ID" value="NC_000918.1"/>
</dbReference>
<dbReference type="RefSeq" id="WP_010880264.1">
    <property type="nucleotide sequence ID" value="NC_000918.1"/>
</dbReference>
<dbReference type="PDB" id="3H0L">
    <property type="method" value="X-ray"/>
    <property type="resolution" value="2.30 A"/>
    <property type="chains" value="B/E/H/K/N/Q/T/W=1-478"/>
</dbReference>
<dbReference type="PDB" id="3H0M">
    <property type="method" value="X-ray"/>
    <property type="resolution" value="2.80 A"/>
    <property type="chains" value="B/E/H/K/N/Q/T/W=1-478"/>
</dbReference>
<dbReference type="PDB" id="3H0R">
    <property type="method" value="X-ray"/>
    <property type="resolution" value="3.00 A"/>
    <property type="chains" value="B/E/H/K/N/Q/T/W=1-478"/>
</dbReference>
<dbReference type="PDBsum" id="3H0L"/>
<dbReference type="PDBsum" id="3H0M"/>
<dbReference type="PDBsum" id="3H0R"/>
<dbReference type="SMR" id="O66766"/>
<dbReference type="STRING" id="224324.aq_461"/>
<dbReference type="EnsemblBacteria" id="AAC06727">
    <property type="protein sequence ID" value="AAC06727"/>
    <property type="gene ID" value="aq_461"/>
</dbReference>
<dbReference type="KEGG" id="aae:aq_461"/>
<dbReference type="PATRIC" id="fig|224324.8.peg.382"/>
<dbReference type="eggNOG" id="COG0064">
    <property type="taxonomic scope" value="Bacteria"/>
</dbReference>
<dbReference type="HOGENOM" id="CLU_019240_0_0_0"/>
<dbReference type="InParanoid" id="O66766"/>
<dbReference type="OrthoDB" id="9804078at2"/>
<dbReference type="EvolutionaryTrace" id="O66766"/>
<dbReference type="Proteomes" id="UP000000798">
    <property type="component" value="Chromosome"/>
</dbReference>
<dbReference type="GO" id="GO:0050566">
    <property type="term" value="F:asparaginyl-tRNA synthase (glutamine-hydrolyzing) activity"/>
    <property type="evidence" value="ECO:0007669"/>
    <property type="project" value="RHEA"/>
</dbReference>
<dbReference type="GO" id="GO:0005524">
    <property type="term" value="F:ATP binding"/>
    <property type="evidence" value="ECO:0007669"/>
    <property type="project" value="UniProtKB-KW"/>
</dbReference>
<dbReference type="GO" id="GO:0050567">
    <property type="term" value="F:glutaminyl-tRNA synthase (glutamine-hydrolyzing) activity"/>
    <property type="evidence" value="ECO:0000318"/>
    <property type="project" value="GO_Central"/>
</dbReference>
<dbReference type="GO" id="GO:0070681">
    <property type="term" value="P:glutaminyl-tRNAGln biosynthesis via transamidation"/>
    <property type="evidence" value="ECO:0000318"/>
    <property type="project" value="GO_Central"/>
</dbReference>
<dbReference type="GO" id="GO:0006412">
    <property type="term" value="P:translation"/>
    <property type="evidence" value="ECO:0007669"/>
    <property type="project" value="UniProtKB-UniRule"/>
</dbReference>
<dbReference type="FunFam" id="1.10.10.410:FF:000001">
    <property type="entry name" value="Aspartyl/glutamyl-tRNA(Asn/Gln) amidotransferase subunit B"/>
    <property type="match status" value="1"/>
</dbReference>
<dbReference type="FunFam" id="1.10.150.380:FF:000001">
    <property type="entry name" value="Aspartyl/glutamyl-tRNA(Asn/Gln) amidotransferase subunit B"/>
    <property type="match status" value="1"/>
</dbReference>
<dbReference type="Gene3D" id="1.10.10.410">
    <property type="match status" value="1"/>
</dbReference>
<dbReference type="Gene3D" id="1.10.150.380">
    <property type="entry name" value="GatB domain, N-terminal subdomain"/>
    <property type="match status" value="1"/>
</dbReference>
<dbReference type="HAMAP" id="MF_00121">
    <property type="entry name" value="GatB"/>
    <property type="match status" value="1"/>
</dbReference>
<dbReference type="InterPro" id="IPR017959">
    <property type="entry name" value="Asn/Gln-tRNA_amidoTrfase_suB/E"/>
</dbReference>
<dbReference type="InterPro" id="IPR006075">
    <property type="entry name" value="Asn/Gln-tRNA_Trfase_suB/E_cat"/>
</dbReference>
<dbReference type="InterPro" id="IPR018027">
    <property type="entry name" value="Asn/Gln_amidotransferase"/>
</dbReference>
<dbReference type="InterPro" id="IPR003789">
    <property type="entry name" value="Asn/Gln_tRNA_amidoTrase-B-like"/>
</dbReference>
<dbReference type="InterPro" id="IPR004413">
    <property type="entry name" value="GatB"/>
</dbReference>
<dbReference type="InterPro" id="IPR042114">
    <property type="entry name" value="GatB_C_1"/>
</dbReference>
<dbReference type="InterPro" id="IPR023168">
    <property type="entry name" value="GatB_Yqey_C_2"/>
</dbReference>
<dbReference type="InterPro" id="IPR017958">
    <property type="entry name" value="Gln-tRNA_amidoTrfase_suB_CS"/>
</dbReference>
<dbReference type="InterPro" id="IPR014746">
    <property type="entry name" value="Gln_synth/guanido_kin_cat_dom"/>
</dbReference>
<dbReference type="NCBIfam" id="TIGR00133">
    <property type="entry name" value="gatB"/>
    <property type="match status" value="1"/>
</dbReference>
<dbReference type="NCBIfam" id="NF004012">
    <property type="entry name" value="PRK05477.1-2"/>
    <property type="match status" value="1"/>
</dbReference>
<dbReference type="NCBIfam" id="NF004014">
    <property type="entry name" value="PRK05477.1-4"/>
    <property type="match status" value="1"/>
</dbReference>
<dbReference type="NCBIfam" id="NF004015">
    <property type="entry name" value="PRK05477.1-5"/>
    <property type="match status" value="1"/>
</dbReference>
<dbReference type="PANTHER" id="PTHR11659">
    <property type="entry name" value="GLUTAMYL-TRNA GLN AMIDOTRANSFERASE SUBUNIT B MITOCHONDRIAL AND PROKARYOTIC PET112-RELATED"/>
    <property type="match status" value="1"/>
</dbReference>
<dbReference type="PANTHER" id="PTHR11659:SF0">
    <property type="entry name" value="GLUTAMYL-TRNA(GLN) AMIDOTRANSFERASE SUBUNIT B, MITOCHONDRIAL"/>
    <property type="match status" value="1"/>
</dbReference>
<dbReference type="Pfam" id="PF02934">
    <property type="entry name" value="GatB_N"/>
    <property type="match status" value="1"/>
</dbReference>
<dbReference type="Pfam" id="PF02637">
    <property type="entry name" value="GatB_Yqey"/>
    <property type="match status" value="1"/>
</dbReference>
<dbReference type="SMART" id="SM00845">
    <property type="entry name" value="GatB_Yqey"/>
    <property type="match status" value="1"/>
</dbReference>
<dbReference type="SUPFAM" id="SSF89095">
    <property type="entry name" value="GatB/YqeY motif"/>
    <property type="match status" value="1"/>
</dbReference>
<dbReference type="SUPFAM" id="SSF55931">
    <property type="entry name" value="Glutamine synthetase/guanido kinase"/>
    <property type="match status" value="1"/>
</dbReference>
<dbReference type="PROSITE" id="PS01234">
    <property type="entry name" value="GATB"/>
    <property type="match status" value="1"/>
</dbReference>
<reference key="1">
    <citation type="journal article" date="1998" name="Nature">
        <title>The complete genome of the hyperthermophilic bacterium Aquifex aeolicus.</title>
        <authorList>
            <person name="Deckert G."/>
            <person name="Warren P.V."/>
            <person name="Gaasterland T."/>
            <person name="Young W.G."/>
            <person name="Lenox A.L."/>
            <person name="Graham D.E."/>
            <person name="Overbeek R."/>
            <person name="Snead M.A."/>
            <person name="Keller M."/>
            <person name="Aujay M."/>
            <person name="Huber R."/>
            <person name="Feldman R.A."/>
            <person name="Short J.M."/>
            <person name="Olsen G.J."/>
            <person name="Swanson R.V."/>
        </authorList>
    </citation>
    <scope>NUCLEOTIDE SEQUENCE [LARGE SCALE GENOMIC DNA]</scope>
    <source>
        <strain>VF5</strain>
    </source>
</reference>
<comment type="function">
    <text evidence="1">Allows the formation of correctly charged Asn-tRNA(Asn) or Gln-tRNA(Gln) through the transamidation of misacylated Asp-tRNA(Asn) or Glu-tRNA(Gln) in organisms which lack either or both of asparaginyl-tRNA or glutaminyl-tRNA synthetases. The reaction takes place in the presence of glutamine and ATP through an activated phospho-Asp-tRNA(Asn) or phospho-Glu-tRNA(Gln) (By similarity).</text>
</comment>
<comment type="catalytic activity">
    <reaction>
        <text>L-glutamyl-tRNA(Gln) + L-glutamine + ATP + H2O = L-glutaminyl-tRNA(Gln) + L-glutamate + ADP + phosphate + H(+)</text>
        <dbReference type="Rhea" id="RHEA:17521"/>
        <dbReference type="Rhea" id="RHEA-COMP:9681"/>
        <dbReference type="Rhea" id="RHEA-COMP:9684"/>
        <dbReference type="ChEBI" id="CHEBI:15377"/>
        <dbReference type="ChEBI" id="CHEBI:15378"/>
        <dbReference type="ChEBI" id="CHEBI:29985"/>
        <dbReference type="ChEBI" id="CHEBI:30616"/>
        <dbReference type="ChEBI" id="CHEBI:43474"/>
        <dbReference type="ChEBI" id="CHEBI:58359"/>
        <dbReference type="ChEBI" id="CHEBI:78520"/>
        <dbReference type="ChEBI" id="CHEBI:78521"/>
        <dbReference type="ChEBI" id="CHEBI:456216"/>
    </reaction>
</comment>
<comment type="catalytic activity">
    <reaction>
        <text>L-aspartyl-tRNA(Asn) + L-glutamine + ATP + H2O = L-asparaginyl-tRNA(Asn) + L-glutamate + ADP + phosphate + 2 H(+)</text>
        <dbReference type="Rhea" id="RHEA:14513"/>
        <dbReference type="Rhea" id="RHEA-COMP:9674"/>
        <dbReference type="Rhea" id="RHEA-COMP:9677"/>
        <dbReference type="ChEBI" id="CHEBI:15377"/>
        <dbReference type="ChEBI" id="CHEBI:15378"/>
        <dbReference type="ChEBI" id="CHEBI:29985"/>
        <dbReference type="ChEBI" id="CHEBI:30616"/>
        <dbReference type="ChEBI" id="CHEBI:43474"/>
        <dbReference type="ChEBI" id="CHEBI:58359"/>
        <dbReference type="ChEBI" id="CHEBI:78515"/>
        <dbReference type="ChEBI" id="CHEBI:78516"/>
        <dbReference type="ChEBI" id="CHEBI:456216"/>
    </reaction>
</comment>
<comment type="subunit">
    <text evidence="1">Heterotrimer of A, B and C subunits.</text>
</comment>
<comment type="similarity">
    <text evidence="2">Belongs to the GatB/GatE family. GatB subfamily.</text>
</comment>
<name>GATB_AQUAE</name>